<sequence>MTDITQKMNELSVQDGGSGAGNSPGAGNGPSGGNGSRRSQYVPPHLRNRNTSSGSGFGGNGGGRGRGSFGGSNYNNAGNRDNTIFGGSGRSRDRGFGGRGGFRSNQSRPGVGRWVDGKHEPSARNERIELELFGTAEDTSFQSSGINFDNYDDIPVEASGDGVPDPITSFTAPPLDELLVENITMSRFTKPTPVQKYSVPIVAGGRDLMACAQTGSGKTGGFLFPVLSESYINGPAPIAESTGAFSSHKVHPTILVMAPTRELVSQIYDEAKKFAYRSWVKPAVVYGGADIGQQIRNLDKGCDLLVATPGRLKDLLERGRVSLANIKYLVLDEADRMLDMGFEPQIRHIVQECDMPDVQDRQTLMFSATFPTDIQMLARDFLKDYIFLSVGRVGSTSENITQKILYVEDEEKKSVLLDLLSAGDAGLTIIFTETKRMADNLADFLYDQGFPATAIHGDRSQYEREKALAAFKSGAAPILVATAVAARGLDIPNVAHVINYDLPSDIDDYVHRIGRTGRAGNVGIATAFFNRNNKNVVKGLIDLLSEANQEVPDFLAKIGRESAFGGKTGGMRGGRGGSRGPVRDFRRGASGGSSGGWGNSSGSAGGWGAAPSGGNSYNSGYSSRSNSYNSSYGSSGYGNPTSTNSWW</sequence>
<feature type="chain" id="PRO_0000285137" description="ATP-dependent RNA helicase DED1">
    <location>
        <begin position="1"/>
        <end position="647"/>
    </location>
</feature>
<feature type="domain" description="Helicase ATP-binding" evidence="2">
    <location>
        <begin position="199"/>
        <end position="388"/>
    </location>
</feature>
<feature type="domain" description="Helicase C-terminal" evidence="3">
    <location>
        <begin position="399"/>
        <end position="559"/>
    </location>
</feature>
<feature type="region of interest" description="Disordered" evidence="4">
    <location>
        <begin position="1"/>
        <end position="122"/>
    </location>
</feature>
<feature type="region of interest" description="Disordered" evidence="4">
    <location>
        <begin position="566"/>
        <end position="647"/>
    </location>
</feature>
<feature type="short sequence motif" description="Q motif">
    <location>
        <begin position="168"/>
        <end position="196"/>
    </location>
</feature>
<feature type="short sequence motif" description="DEAD box">
    <location>
        <begin position="332"/>
        <end position="335"/>
    </location>
</feature>
<feature type="compositionally biased region" description="Polar residues" evidence="4">
    <location>
        <begin position="1"/>
        <end position="12"/>
    </location>
</feature>
<feature type="compositionally biased region" description="Gly residues" evidence="4">
    <location>
        <begin position="16"/>
        <end position="35"/>
    </location>
</feature>
<feature type="compositionally biased region" description="Gly residues" evidence="4">
    <location>
        <begin position="55"/>
        <end position="70"/>
    </location>
</feature>
<feature type="compositionally biased region" description="Gly residues" evidence="4">
    <location>
        <begin position="566"/>
        <end position="579"/>
    </location>
</feature>
<feature type="compositionally biased region" description="Gly residues" evidence="4">
    <location>
        <begin position="589"/>
        <end position="608"/>
    </location>
</feature>
<feature type="compositionally biased region" description="Low complexity" evidence="4">
    <location>
        <begin position="609"/>
        <end position="647"/>
    </location>
</feature>
<feature type="binding site" evidence="2">
    <location>
        <begin position="212"/>
        <end position="219"/>
    </location>
    <ligand>
        <name>ATP</name>
        <dbReference type="ChEBI" id="CHEBI:30616"/>
    </ligand>
</feature>
<comment type="function">
    <text evidence="1">ATP-binding RNA helicase involved in translation initiation. Remodels RNA in response to ADP and ATP concentrations by facilitating disruption, but also formation of RNA duplexes (By similarity).</text>
</comment>
<comment type="catalytic activity">
    <reaction>
        <text>ATP + H2O = ADP + phosphate + H(+)</text>
        <dbReference type="Rhea" id="RHEA:13065"/>
        <dbReference type="ChEBI" id="CHEBI:15377"/>
        <dbReference type="ChEBI" id="CHEBI:15378"/>
        <dbReference type="ChEBI" id="CHEBI:30616"/>
        <dbReference type="ChEBI" id="CHEBI:43474"/>
        <dbReference type="ChEBI" id="CHEBI:456216"/>
        <dbReference type="EC" id="3.6.4.13"/>
    </reaction>
</comment>
<comment type="subcellular location">
    <subcellularLocation>
        <location evidence="1">Cytoplasm</location>
    </subcellularLocation>
</comment>
<comment type="domain">
    <text>The Q motif is unique to and characteristic of the DEAD box family of RNA helicases and controls ATP binding and hydrolysis.</text>
</comment>
<comment type="similarity">
    <text evidence="5">Belongs to the DEAD box helicase family. DDX3/DED1 subfamily.</text>
</comment>
<comment type="sequence caution" evidence="5">
    <conflict type="erroneous initiation">
        <sequence resource="EMBL-CDS" id="ABN65127"/>
    </conflict>
</comment>
<keyword id="KW-0067">ATP-binding</keyword>
<keyword id="KW-0963">Cytoplasm</keyword>
<keyword id="KW-0347">Helicase</keyword>
<keyword id="KW-0378">Hydrolase</keyword>
<keyword id="KW-0396">Initiation factor</keyword>
<keyword id="KW-0547">Nucleotide-binding</keyword>
<keyword id="KW-0648">Protein biosynthesis</keyword>
<keyword id="KW-1185">Reference proteome</keyword>
<keyword id="KW-0694">RNA-binding</keyword>
<name>DED1_PICST</name>
<dbReference type="EC" id="3.6.4.13"/>
<dbReference type="EMBL" id="CP000496">
    <property type="protein sequence ID" value="ABN65127.2"/>
    <property type="status" value="ALT_INIT"/>
    <property type="molecule type" value="Genomic_DNA"/>
</dbReference>
<dbReference type="RefSeq" id="XP_001383156.2">
    <property type="nucleotide sequence ID" value="XM_001383119.1"/>
</dbReference>
<dbReference type="SMR" id="A3LQ01"/>
<dbReference type="FunCoup" id="A3LQ01">
    <property type="interactions" value="1375"/>
</dbReference>
<dbReference type="STRING" id="322104.A3LQ01"/>
<dbReference type="GeneID" id="4837080"/>
<dbReference type="KEGG" id="pic:PICST_55603"/>
<dbReference type="eggNOG" id="KOG0335">
    <property type="taxonomic scope" value="Eukaryota"/>
</dbReference>
<dbReference type="HOGENOM" id="CLU_003041_16_3_1"/>
<dbReference type="InParanoid" id="A3LQ01"/>
<dbReference type="OrthoDB" id="196131at2759"/>
<dbReference type="Proteomes" id="UP000002258">
    <property type="component" value="Chromosome 2"/>
</dbReference>
<dbReference type="GO" id="GO:0005737">
    <property type="term" value="C:cytoplasm"/>
    <property type="evidence" value="ECO:0007669"/>
    <property type="project" value="UniProtKB-SubCell"/>
</dbReference>
<dbReference type="GO" id="GO:0005524">
    <property type="term" value="F:ATP binding"/>
    <property type="evidence" value="ECO:0007669"/>
    <property type="project" value="UniProtKB-KW"/>
</dbReference>
<dbReference type="GO" id="GO:0016887">
    <property type="term" value="F:ATP hydrolysis activity"/>
    <property type="evidence" value="ECO:0007669"/>
    <property type="project" value="RHEA"/>
</dbReference>
<dbReference type="GO" id="GO:0003723">
    <property type="term" value="F:RNA binding"/>
    <property type="evidence" value="ECO:0007669"/>
    <property type="project" value="UniProtKB-KW"/>
</dbReference>
<dbReference type="GO" id="GO:0003724">
    <property type="term" value="F:RNA helicase activity"/>
    <property type="evidence" value="ECO:0007669"/>
    <property type="project" value="UniProtKB-EC"/>
</dbReference>
<dbReference type="GO" id="GO:0003743">
    <property type="term" value="F:translation initiation factor activity"/>
    <property type="evidence" value="ECO:0007669"/>
    <property type="project" value="UniProtKB-KW"/>
</dbReference>
<dbReference type="CDD" id="cd18787">
    <property type="entry name" value="SF2_C_DEAD"/>
    <property type="match status" value="1"/>
</dbReference>
<dbReference type="FunFam" id="3.40.50.300:FF:000160">
    <property type="entry name" value="ATP-dependent RNA helicase DDX3X"/>
    <property type="match status" value="1"/>
</dbReference>
<dbReference type="FunFam" id="3.40.50.300:FF:000008">
    <property type="entry name" value="ATP-dependent RNA helicase RhlB"/>
    <property type="match status" value="1"/>
</dbReference>
<dbReference type="Gene3D" id="3.40.50.300">
    <property type="entry name" value="P-loop containing nucleotide triphosphate hydrolases"/>
    <property type="match status" value="2"/>
</dbReference>
<dbReference type="InterPro" id="IPR011545">
    <property type="entry name" value="DEAD/DEAH_box_helicase_dom"/>
</dbReference>
<dbReference type="InterPro" id="IPR014001">
    <property type="entry name" value="Helicase_ATP-bd"/>
</dbReference>
<dbReference type="InterPro" id="IPR001650">
    <property type="entry name" value="Helicase_C-like"/>
</dbReference>
<dbReference type="InterPro" id="IPR027417">
    <property type="entry name" value="P-loop_NTPase"/>
</dbReference>
<dbReference type="InterPro" id="IPR000629">
    <property type="entry name" value="RNA-helicase_DEAD-box_CS"/>
</dbReference>
<dbReference type="InterPro" id="IPR014014">
    <property type="entry name" value="RNA_helicase_DEAD_Q_motif"/>
</dbReference>
<dbReference type="PANTHER" id="PTHR47958">
    <property type="entry name" value="ATP-DEPENDENT RNA HELICASE DBP3"/>
    <property type="match status" value="1"/>
</dbReference>
<dbReference type="Pfam" id="PF00270">
    <property type="entry name" value="DEAD"/>
    <property type="match status" value="1"/>
</dbReference>
<dbReference type="Pfam" id="PF00271">
    <property type="entry name" value="Helicase_C"/>
    <property type="match status" value="1"/>
</dbReference>
<dbReference type="SMART" id="SM00487">
    <property type="entry name" value="DEXDc"/>
    <property type="match status" value="1"/>
</dbReference>
<dbReference type="SMART" id="SM00490">
    <property type="entry name" value="HELICc"/>
    <property type="match status" value="1"/>
</dbReference>
<dbReference type="SUPFAM" id="SSF52540">
    <property type="entry name" value="P-loop containing nucleoside triphosphate hydrolases"/>
    <property type="match status" value="1"/>
</dbReference>
<dbReference type="PROSITE" id="PS00039">
    <property type="entry name" value="DEAD_ATP_HELICASE"/>
    <property type="match status" value="1"/>
</dbReference>
<dbReference type="PROSITE" id="PS51192">
    <property type="entry name" value="HELICASE_ATP_BIND_1"/>
    <property type="match status" value="1"/>
</dbReference>
<dbReference type="PROSITE" id="PS51194">
    <property type="entry name" value="HELICASE_CTER"/>
    <property type="match status" value="1"/>
</dbReference>
<dbReference type="PROSITE" id="PS51195">
    <property type="entry name" value="Q_MOTIF"/>
    <property type="match status" value="1"/>
</dbReference>
<evidence type="ECO:0000250" key="1"/>
<evidence type="ECO:0000255" key="2">
    <source>
        <dbReference type="PROSITE-ProRule" id="PRU00541"/>
    </source>
</evidence>
<evidence type="ECO:0000255" key="3">
    <source>
        <dbReference type="PROSITE-ProRule" id="PRU00542"/>
    </source>
</evidence>
<evidence type="ECO:0000256" key="4">
    <source>
        <dbReference type="SAM" id="MobiDB-lite"/>
    </source>
</evidence>
<evidence type="ECO:0000305" key="5"/>
<gene>
    <name type="primary">DED1</name>
    <name type="ORF">PICST_55603</name>
</gene>
<accession>A3LQ01</accession>
<protein>
    <recommendedName>
        <fullName>ATP-dependent RNA helicase DED1</fullName>
        <ecNumber>3.6.4.13</ecNumber>
    </recommendedName>
</protein>
<organism>
    <name type="scientific">Scheffersomyces stipitis (strain ATCC 58785 / CBS 6054 / NBRC 10063 / NRRL Y-11545)</name>
    <name type="common">Yeast</name>
    <name type="synonym">Pichia stipitis</name>
    <dbReference type="NCBI Taxonomy" id="322104"/>
    <lineage>
        <taxon>Eukaryota</taxon>
        <taxon>Fungi</taxon>
        <taxon>Dikarya</taxon>
        <taxon>Ascomycota</taxon>
        <taxon>Saccharomycotina</taxon>
        <taxon>Pichiomycetes</taxon>
        <taxon>Debaryomycetaceae</taxon>
        <taxon>Scheffersomyces</taxon>
    </lineage>
</organism>
<proteinExistence type="inferred from homology"/>
<reference key="1">
    <citation type="journal article" date="2007" name="Nat. Biotechnol.">
        <title>Genome sequence of the lignocellulose-bioconverting and xylose-fermenting yeast Pichia stipitis.</title>
        <authorList>
            <person name="Jeffries T.W."/>
            <person name="Grigoriev I.V."/>
            <person name="Grimwood J."/>
            <person name="Laplaza J.M."/>
            <person name="Aerts A."/>
            <person name="Salamov A."/>
            <person name="Schmutz J."/>
            <person name="Lindquist E."/>
            <person name="Dehal P."/>
            <person name="Shapiro H."/>
            <person name="Jin Y.-S."/>
            <person name="Passoth V."/>
            <person name="Richardson P.M."/>
        </authorList>
    </citation>
    <scope>NUCLEOTIDE SEQUENCE [LARGE SCALE GENOMIC DNA]</scope>
    <source>
        <strain>ATCC 58785 / CBS 6054 / NBRC 10063 / NRRL Y-11545</strain>
    </source>
</reference>